<reference key="1">
    <citation type="journal article" date="1989" name="J. Bacteriol.">
        <title>Nucleotide sequence and replication characteristics of RepFIB, a basic replicon of IncF plasmids.</title>
        <authorList>
            <person name="Saul D."/>
            <person name="Spiers A.J."/>
            <person name="McAnulty J."/>
            <person name="Gibbs M.G."/>
            <person name="Bergquist P.L."/>
            <person name="Hill D.F."/>
        </authorList>
    </citation>
    <scope>NUCLEOTIDE SEQUENCE [GENOMIC DNA]</scope>
</reference>
<accession>Q60228</accession>
<geneLocation type="plasmid">
    <name>IncFI P307</name>
</geneLocation>
<evidence type="ECO:0000250" key="1"/>
<evidence type="ECO:0000305" key="2"/>
<organism>
    <name type="scientific">Escherichia coli</name>
    <dbReference type="NCBI Taxonomy" id="562"/>
    <lineage>
        <taxon>Bacteria</taxon>
        <taxon>Pseudomonadati</taxon>
        <taxon>Pseudomonadota</taxon>
        <taxon>Gammaproteobacteria</taxon>
        <taxon>Enterobacterales</taxon>
        <taxon>Enterobacteriaceae</taxon>
        <taxon>Escherichia</taxon>
    </lineage>
</organism>
<dbReference type="EMBL" id="M26308">
    <property type="protein sequence ID" value="AAB61759.1"/>
    <property type="molecule type" value="Genomic_DNA"/>
</dbReference>
<dbReference type="RefSeq" id="WP_001270417.1">
    <property type="nucleotide sequence ID" value="NZ_WVUR01000103.1"/>
</dbReference>
<dbReference type="SMR" id="Q60228"/>
<dbReference type="Gene3D" id="3.30.2310.20">
    <property type="entry name" value="RelE-like"/>
    <property type="match status" value="1"/>
</dbReference>
<dbReference type="InterPro" id="IPR007712">
    <property type="entry name" value="RelE/ParE_toxin"/>
</dbReference>
<dbReference type="InterPro" id="IPR035093">
    <property type="entry name" value="RelE/ParE_toxin_dom_sf"/>
</dbReference>
<dbReference type="NCBIfam" id="TIGR02385">
    <property type="entry name" value="RelE_StbE"/>
    <property type="match status" value="1"/>
</dbReference>
<dbReference type="PANTHER" id="PTHR35601">
    <property type="entry name" value="TOXIN RELE"/>
    <property type="match status" value="1"/>
</dbReference>
<dbReference type="PANTHER" id="PTHR35601:SF1">
    <property type="entry name" value="TOXIN RELE"/>
    <property type="match status" value="1"/>
</dbReference>
<dbReference type="Pfam" id="PF05016">
    <property type="entry name" value="ParE_toxin"/>
    <property type="match status" value="1"/>
</dbReference>
<dbReference type="SUPFAM" id="SSF143011">
    <property type="entry name" value="RelE-like"/>
    <property type="match status" value="1"/>
</dbReference>
<protein>
    <recommendedName>
        <fullName>Putative RelE-like toxin protein</fullName>
    </recommendedName>
</protein>
<sequence length="95" mass="11214">MRYQVKFREDALKEWQKLDKAIQQQFAKKLKKCCDNPHIPSAKLRGIKDCYKIKLRASGFRLVYQVIDEQLIIAVVAVGKRERSDVYNLASERMR</sequence>
<keyword id="KW-0614">Plasmid</keyword>
<keyword id="KW-1277">Toxin-antitoxin system</keyword>
<name>RELX_ECOLX</name>
<comment type="function">
    <text evidence="1">Toxic component of a type II toxin-antitoxin (TA) system.</text>
</comment>
<comment type="similarity">
    <text evidence="2">Belongs to the RelE toxin family.</text>
</comment>
<feature type="chain" id="PRO_0000068430" description="Putative RelE-like toxin protein">
    <location>
        <begin position="1"/>
        <end position="95"/>
    </location>
</feature>
<proteinExistence type="inferred from homology"/>